<comment type="catalytic activity">
    <reaction>
        <text>tRNA(His) + L-histidine + ATP = L-histidyl-tRNA(His) + AMP + diphosphate + H(+)</text>
        <dbReference type="Rhea" id="RHEA:17313"/>
        <dbReference type="Rhea" id="RHEA-COMP:9665"/>
        <dbReference type="Rhea" id="RHEA-COMP:9689"/>
        <dbReference type="ChEBI" id="CHEBI:15378"/>
        <dbReference type="ChEBI" id="CHEBI:30616"/>
        <dbReference type="ChEBI" id="CHEBI:33019"/>
        <dbReference type="ChEBI" id="CHEBI:57595"/>
        <dbReference type="ChEBI" id="CHEBI:78442"/>
        <dbReference type="ChEBI" id="CHEBI:78527"/>
        <dbReference type="ChEBI" id="CHEBI:456215"/>
        <dbReference type="EC" id="6.1.1.21"/>
    </reaction>
</comment>
<comment type="subunit">
    <text evidence="1">Homodimer.</text>
</comment>
<comment type="subcellular location">
    <subcellularLocation>
        <location evidence="1">Cytoplasm</location>
    </subcellularLocation>
</comment>
<comment type="similarity">
    <text evidence="2">Belongs to the class-II aminoacyl-tRNA synthetase family.</text>
</comment>
<protein>
    <recommendedName>
        <fullName>Histidine--tRNA ligase</fullName>
        <ecNumber>6.1.1.21</ecNumber>
    </recommendedName>
    <alternativeName>
        <fullName>Histidyl-tRNA synthetase</fullName>
        <shortName>HisRS</shortName>
    </alternativeName>
</protein>
<keyword id="KW-0030">Aminoacyl-tRNA synthetase</keyword>
<keyword id="KW-0067">ATP-binding</keyword>
<keyword id="KW-0963">Cytoplasm</keyword>
<keyword id="KW-0436">Ligase</keyword>
<keyword id="KW-0547">Nucleotide-binding</keyword>
<keyword id="KW-0648">Protein biosynthesis</keyword>
<keyword id="KW-1185">Reference proteome</keyword>
<name>SYH_XYLFT</name>
<reference key="1">
    <citation type="journal article" date="2003" name="J. Bacteriol.">
        <title>Comparative analyses of the complete genome sequences of Pierce's disease and citrus variegated chlorosis strains of Xylella fastidiosa.</title>
        <authorList>
            <person name="Van Sluys M.A."/>
            <person name="de Oliveira M.C."/>
            <person name="Monteiro-Vitorello C.B."/>
            <person name="Miyaki C.Y."/>
            <person name="Furlan L.R."/>
            <person name="Camargo L.E.A."/>
            <person name="da Silva A.C.R."/>
            <person name="Moon D.H."/>
            <person name="Takita M.A."/>
            <person name="Lemos E.G.M."/>
            <person name="Machado M.A."/>
            <person name="Ferro M.I.T."/>
            <person name="da Silva F.R."/>
            <person name="Goldman M.H.S."/>
            <person name="Goldman G.H."/>
            <person name="Lemos M.V.F."/>
            <person name="El-Dorry H."/>
            <person name="Tsai S.M."/>
            <person name="Carrer H."/>
            <person name="Carraro D.M."/>
            <person name="de Oliveira R.C."/>
            <person name="Nunes L.R."/>
            <person name="Siqueira W.J."/>
            <person name="Coutinho L.L."/>
            <person name="Kimura E.T."/>
            <person name="Ferro E.S."/>
            <person name="Harakava R."/>
            <person name="Kuramae E.E."/>
            <person name="Marino C.L."/>
            <person name="Giglioti E."/>
            <person name="Abreu I.L."/>
            <person name="Alves L.M.C."/>
            <person name="do Amaral A.M."/>
            <person name="Baia G.S."/>
            <person name="Blanco S.R."/>
            <person name="Brito M.S."/>
            <person name="Cannavan F.S."/>
            <person name="Celestino A.V."/>
            <person name="da Cunha A.F."/>
            <person name="Fenille R.C."/>
            <person name="Ferro J.A."/>
            <person name="Formighieri E.F."/>
            <person name="Kishi L.T."/>
            <person name="Leoni S.G."/>
            <person name="Oliveira A.R."/>
            <person name="Rosa V.E. Jr."/>
            <person name="Sassaki F.T."/>
            <person name="Sena J.A.D."/>
            <person name="de Souza A.A."/>
            <person name="Truffi D."/>
            <person name="Tsukumo F."/>
            <person name="Yanai G.M."/>
            <person name="Zaros L.G."/>
            <person name="Civerolo E.L."/>
            <person name="Simpson A.J.G."/>
            <person name="Almeida N.F. Jr."/>
            <person name="Setubal J.C."/>
            <person name="Kitajima J.P."/>
        </authorList>
    </citation>
    <scope>NUCLEOTIDE SEQUENCE [LARGE SCALE GENOMIC DNA]</scope>
    <source>
        <strain>Temecula1 / ATCC 700964</strain>
    </source>
</reference>
<organism>
    <name type="scientific">Xylella fastidiosa (strain Temecula1 / ATCC 700964)</name>
    <dbReference type="NCBI Taxonomy" id="183190"/>
    <lineage>
        <taxon>Bacteria</taxon>
        <taxon>Pseudomonadati</taxon>
        <taxon>Pseudomonadota</taxon>
        <taxon>Gammaproteobacteria</taxon>
        <taxon>Lysobacterales</taxon>
        <taxon>Lysobacteraceae</taxon>
        <taxon>Xylella</taxon>
    </lineage>
</organism>
<proteinExistence type="inferred from homology"/>
<dbReference type="EC" id="6.1.1.21"/>
<dbReference type="EMBL" id="AE009442">
    <property type="protein sequence ID" value="AAO29119.1"/>
    <property type="molecule type" value="Genomic_DNA"/>
</dbReference>
<dbReference type="RefSeq" id="WP_011098026.1">
    <property type="nucleotide sequence ID" value="NC_004556.1"/>
</dbReference>
<dbReference type="SMR" id="Q87C26"/>
<dbReference type="GeneID" id="93905081"/>
<dbReference type="KEGG" id="xft:PD_1270"/>
<dbReference type="HOGENOM" id="CLU_025113_3_0_6"/>
<dbReference type="Proteomes" id="UP000002516">
    <property type="component" value="Chromosome"/>
</dbReference>
<dbReference type="GO" id="GO:0005737">
    <property type="term" value="C:cytoplasm"/>
    <property type="evidence" value="ECO:0007669"/>
    <property type="project" value="UniProtKB-SubCell"/>
</dbReference>
<dbReference type="GO" id="GO:0005524">
    <property type="term" value="F:ATP binding"/>
    <property type="evidence" value="ECO:0007669"/>
    <property type="project" value="UniProtKB-UniRule"/>
</dbReference>
<dbReference type="GO" id="GO:0004821">
    <property type="term" value="F:histidine-tRNA ligase activity"/>
    <property type="evidence" value="ECO:0007669"/>
    <property type="project" value="UniProtKB-UniRule"/>
</dbReference>
<dbReference type="GO" id="GO:0006427">
    <property type="term" value="P:histidyl-tRNA aminoacylation"/>
    <property type="evidence" value="ECO:0007669"/>
    <property type="project" value="UniProtKB-UniRule"/>
</dbReference>
<dbReference type="CDD" id="cd00773">
    <property type="entry name" value="HisRS-like_core"/>
    <property type="match status" value="1"/>
</dbReference>
<dbReference type="CDD" id="cd00859">
    <property type="entry name" value="HisRS_anticodon"/>
    <property type="match status" value="1"/>
</dbReference>
<dbReference type="FunFam" id="3.40.50.800:FF:000027">
    <property type="entry name" value="Histidine--tRNA ligase"/>
    <property type="match status" value="1"/>
</dbReference>
<dbReference type="Gene3D" id="3.40.50.800">
    <property type="entry name" value="Anticodon-binding domain"/>
    <property type="match status" value="1"/>
</dbReference>
<dbReference type="Gene3D" id="3.30.930.10">
    <property type="entry name" value="Bira Bifunctional Protein, Domain 2"/>
    <property type="match status" value="1"/>
</dbReference>
<dbReference type="HAMAP" id="MF_00127">
    <property type="entry name" value="His_tRNA_synth"/>
    <property type="match status" value="1"/>
</dbReference>
<dbReference type="InterPro" id="IPR006195">
    <property type="entry name" value="aa-tRNA-synth_II"/>
</dbReference>
<dbReference type="InterPro" id="IPR045864">
    <property type="entry name" value="aa-tRNA-synth_II/BPL/LPL"/>
</dbReference>
<dbReference type="InterPro" id="IPR004154">
    <property type="entry name" value="Anticodon-bd"/>
</dbReference>
<dbReference type="InterPro" id="IPR036621">
    <property type="entry name" value="Anticodon-bd_dom_sf"/>
</dbReference>
<dbReference type="InterPro" id="IPR015807">
    <property type="entry name" value="His-tRNA-ligase"/>
</dbReference>
<dbReference type="InterPro" id="IPR041715">
    <property type="entry name" value="HisRS-like_core"/>
</dbReference>
<dbReference type="InterPro" id="IPR004516">
    <property type="entry name" value="HisRS/HisZ"/>
</dbReference>
<dbReference type="InterPro" id="IPR033656">
    <property type="entry name" value="HisRS_anticodon"/>
</dbReference>
<dbReference type="NCBIfam" id="TIGR00442">
    <property type="entry name" value="hisS"/>
    <property type="match status" value="1"/>
</dbReference>
<dbReference type="PANTHER" id="PTHR11476:SF7">
    <property type="entry name" value="HISTIDINE--TRNA LIGASE"/>
    <property type="match status" value="1"/>
</dbReference>
<dbReference type="PANTHER" id="PTHR11476">
    <property type="entry name" value="HISTIDYL-TRNA SYNTHETASE"/>
    <property type="match status" value="1"/>
</dbReference>
<dbReference type="Pfam" id="PF03129">
    <property type="entry name" value="HGTP_anticodon"/>
    <property type="match status" value="1"/>
</dbReference>
<dbReference type="Pfam" id="PF13393">
    <property type="entry name" value="tRNA-synt_His"/>
    <property type="match status" value="1"/>
</dbReference>
<dbReference type="PIRSF" id="PIRSF001549">
    <property type="entry name" value="His-tRNA_synth"/>
    <property type="match status" value="1"/>
</dbReference>
<dbReference type="SUPFAM" id="SSF52954">
    <property type="entry name" value="Class II aaRS ABD-related"/>
    <property type="match status" value="1"/>
</dbReference>
<dbReference type="SUPFAM" id="SSF55681">
    <property type="entry name" value="Class II aaRS and biotin synthetases"/>
    <property type="match status" value="1"/>
</dbReference>
<dbReference type="PROSITE" id="PS50862">
    <property type="entry name" value="AA_TRNA_LIGASE_II"/>
    <property type="match status" value="1"/>
</dbReference>
<gene>
    <name type="primary">hisS</name>
    <name type="ordered locus">PD_1270</name>
</gene>
<accession>Q87C26</accession>
<sequence>MIKPRTPPGVLELLPREQIAFQRMLDVIRRNYERFGFLPVETPVFELSDVLLTKSGGETERQVYFVQSTGTLANAAESGATRLPELALRFDLTVPLARYVAEYEHVLAFPFRRYQIQRVYRGERAQRGRFREFYQCDIDVIGKQTLSIRYDAEVLAVIHAVFSELGIGDFQVQLNNRKVLRGFLESQGVRDGELQLAVLREVDKLDKRGVLDVRDTLIGQGFGIPAAQVENILTFVATRSTSHADALARLDALIQDSGPEAHDMLRQGVAELREVLTLVNVLGVPEHAYRLNFSIARGLDYYTGTVYETALINHPQIGSICSGGRYENLANHYTQSKLPGVGISIGLTRLFWQLRDAGLIDGIAESSVQAMVVLMDEATLDDALDIARRLRIGGINTEVQMEAKKLSKQFQYASRAGIRFVVLAGDDERARGVVAVKDLTREQQFEIPREELASTLQVELEQAKVM</sequence>
<evidence type="ECO:0000250" key="1"/>
<evidence type="ECO:0000305" key="2"/>
<feature type="chain" id="PRO_0000136304" description="Histidine--tRNA ligase">
    <location>
        <begin position="1"/>
        <end position="466"/>
    </location>
</feature>